<accession>P9WGV1</accession>
<accession>L0T6I5</accession>
<accession>P77899</accession>
<gene>
    <name evidence="1" type="primary">metK</name>
    <name type="ordered locus">Rv1392</name>
    <name type="ORF">MTCY21B4.09</name>
</gene>
<keyword id="KW-0002">3D-structure</keyword>
<keyword id="KW-0067">ATP-binding</keyword>
<keyword id="KW-0963">Cytoplasm</keyword>
<keyword id="KW-1017">Isopeptide bond</keyword>
<keyword id="KW-0460">Magnesium</keyword>
<keyword id="KW-0479">Metal-binding</keyword>
<keyword id="KW-0547">Nucleotide-binding</keyword>
<keyword id="KW-0554">One-carbon metabolism</keyword>
<keyword id="KW-0630">Potassium</keyword>
<keyword id="KW-1185">Reference proteome</keyword>
<keyword id="KW-0808">Transferase</keyword>
<keyword id="KW-0832">Ubl conjugation</keyword>
<name>METK_MYCTU</name>
<protein>
    <recommendedName>
        <fullName evidence="1">S-adenosylmethionine synthase</fullName>
        <shortName evidence="1">AdoMet synthase</shortName>
        <ecNumber evidence="1">2.5.1.6</ecNumber>
    </recommendedName>
    <alternativeName>
        <fullName evidence="1">MAT</fullName>
    </alternativeName>
    <alternativeName>
        <fullName evidence="1">Methionine adenosyltransferase</fullName>
    </alternativeName>
</protein>
<feature type="chain" id="PRO_0000174557" description="S-adenosylmethionine synthase">
    <location>
        <begin position="1"/>
        <end position="403"/>
    </location>
</feature>
<feature type="region of interest" description="Flexible loop" evidence="1">
    <location>
        <begin position="104"/>
        <end position="114"/>
    </location>
</feature>
<feature type="binding site" description="in other chain" evidence="1">
    <location>
        <position position="17"/>
    </location>
    <ligand>
        <name>ATP</name>
        <dbReference type="ChEBI" id="CHEBI:30616"/>
        <note>ligand shared between two neighboring subunits</note>
    </ligand>
</feature>
<feature type="binding site" evidence="1">
    <location>
        <position position="19"/>
    </location>
    <ligand>
        <name>Mg(2+)</name>
        <dbReference type="ChEBI" id="CHEBI:18420"/>
    </ligand>
</feature>
<feature type="binding site" evidence="1">
    <location>
        <position position="45"/>
    </location>
    <ligand>
        <name>K(+)</name>
        <dbReference type="ChEBI" id="CHEBI:29103"/>
    </ligand>
</feature>
<feature type="binding site" description="in other chain" evidence="1">
    <location>
        <position position="58"/>
    </location>
    <ligand>
        <name>L-methionine</name>
        <dbReference type="ChEBI" id="CHEBI:57844"/>
        <note>ligand shared between two neighboring subunits</note>
    </ligand>
</feature>
<feature type="binding site" description="in other chain" evidence="1">
    <location>
        <position position="104"/>
    </location>
    <ligand>
        <name>L-methionine</name>
        <dbReference type="ChEBI" id="CHEBI:57844"/>
        <note>ligand shared between two neighboring subunits</note>
    </ligand>
</feature>
<feature type="binding site" description="in other chain" evidence="1">
    <location>
        <begin position="179"/>
        <end position="181"/>
    </location>
    <ligand>
        <name>ATP</name>
        <dbReference type="ChEBI" id="CHEBI:30616"/>
        <note>ligand shared between two neighboring subunits</note>
    </ligand>
</feature>
<feature type="binding site" description="in other chain" evidence="1">
    <location>
        <begin position="250"/>
        <end position="251"/>
    </location>
    <ligand>
        <name>ATP</name>
        <dbReference type="ChEBI" id="CHEBI:30616"/>
        <note>ligand shared between two neighboring subunits</note>
    </ligand>
</feature>
<feature type="binding site" evidence="1">
    <location>
        <position position="259"/>
    </location>
    <ligand>
        <name>ATP</name>
        <dbReference type="ChEBI" id="CHEBI:30616"/>
        <note>ligand shared between two neighboring subunits</note>
    </ligand>
</feature>
<feature type="binding site" evidence="1">
    <location>
        <position position="259"/>
    </location>
    <ligand>
        <name>L-methionine</name>
        <dbReference type="ChEBI" id="CHEBI:57844"/>
        <note>ligand shared between two neighboring subunits</note>
    </ligand>
</feature>
<feature type="binding site" description="in other chain" evidence="1">
    <location>
        <begin position="265"/>
        <end position="266"/>
    </location>
    <ligand>
        <name>ATP</name>
        <dbReference type="ChEBI" id="CHEBI:30616"/>
        <note>ligand shared between two neighboring subunits</note>
    </ligand>
</feature>
<feature type="binding site" evidence="1">
    <location>
        <position position="282"/>
    </location>
    <ligand>
        <name>ATP</name>
        <dbReference type="ChEBI" id="CHEBI:30616"/>
        <note>ligand shared between two neighboring subunits</note>
    </ligand>
</feature>
<feature type="binding site" evidence="1">
    <location>
        <position position="286"/>
    </location>
    <ligand>
        <name>ATP</name>
        <dbReference type="ChEBI" id="CHEBI:30616"/>
        <note>ligand shared between two neighboring subunits</note>
    </ligand>
</feature>
<feature type="binding site" description="in other chain" evidence="1">
    <location>
        <position position="290"/>
    </location>
    <ligand>
        <name>L-methionine</name>
        <dbReference type="ChEBI" id="CHEBI:57844"/>
        <note>ligand shared between two neighboring subunits</note>
    </ligand>
</feature>
<feature type="cross-link" description="Isoglutamyl lysine isopeptide (Lys-Gln) (interchain with Q-Cter in protein Pup)" evidence="2">
    <location>
        <position position="345"/>
    </location>
</feature>
<feature type="strand" evidence="4">
    <location>
        <begin position="7"/>
        <end position="13"/>
    </location>
</feature>
<feature type="helix" evidence="4">
    <location>
        <begin position="18"/>
        <end position="36"/>
    </location>
</feature>
<feature type="strand" evidence="4">
    <location>
        <begin position="41"/>
        <end position="49"/>
    </location>
</feature>
<feature type="strand" evidence="4">
    <location>
        <begin position="52"/>
        <end position="60"/>
    </location>
</feature>
<feature type="helix" evidence="4">
    <location>
        <begin position="64"/>
        <end position="68"/>
    </location>
</feature>
<feature type="helix" evidence="4">
    <location>
        <begin position="70"/>
        <end position="81"/>
    </location>
</feature>
<feature type="helix" evidence="4">
    <location>
        <begin position="86"/>
        <end position="88"/>
    </location>
</feature>
<feature type="turn" evidence="4">
    <location>
        <begin position="92"/>
        <end position="94"/>
    </location>
</feature>
<feature type="strand" evidence="4">
    <location>
        <begin position="95"/>
        <end position="102"/>
    </location>
</feature>
<feature type="strand" evidence="4">
    <location>
        <begin position="136"/>
        <end position="143"/>
    </location>
</feature>
<feature type="helix" evidence="4">
    <location>
        <begin position="152"/>
        <end position="169"/>
    </location>
</feature>
<feature type="strand" evidence="4">
    <location>
        <begin position="176"/>
        <end position="189"/>
    </location>
</feature>
<feature type="strand" evidence="4">
    <location>
        <begin position="192"/>
        <end position="205"/>
    </location>
</feature>
<feature type="turn" evidence="4">
    <location>
        <begin position="211"/>
        <end position="214"/>
    </location>
</feature>
<feature type="helix" evidence="4">
    <location>
        <begin position="215"/>
        <end position="222"/>
    </location>
</feature>
<feature type="helix" evidence="4">
    <location>
        <begin position="224"/>
        <end position="231"/>
    </location>
</feature>
<feature type="strand" evidence="4">
    <location>
        <begin position="242"/>
        <end position="246"/>
    </location>
</feature>
<feature type="turn" evidence="4">
    <location>
        <begin position="255"/>
        <end position="258"/>
    </location>
</feature>
<feature type="strand" evidence="4">
    <location>
        <begin position="259"/>
        <end position="262"/>
    </location>
</feature>
<feature type="helix" evidence="4">
    <location>
        <begin position="267"/>
        <end position="270"/>
    </location>
</feature>
<feature type="turn" evidence="4">
    <location>
        <begin position="271"/>
        <end position="274"/>
    </location>
</feature>
<feature type="helix" evidence="4">
    <location>
        <begin position="291"/>
        <end position="308"/>
    </location>
</feature>
<feature type="strand" evidence="4">
    <location>
        <begin position="311"/>
        <end position="321"/>
    </location>
</feature>
<feature type="strand" evidence="4">
    <location>
        <begin position="329"/>
        <end position="334"/>
    </location>
</feature>
<feature type="strand" evidence="4">
    <location>
        <begin position="339"/>
        <end position="341"/>
    </location>
</feature>
<feature type="helix" evidence="4">
    <location>
        <begin position="343"/>
        <end position="353"/>
    </location>
</feature>
<feature type="helix" evidence="4">
    <location>
        <begin position="358"/>
        <end position="364"/>
    </location>
</feature>
<feature type="strand" evidence="4">
    <location>
        <begin position="368"/>
        <end position="370"/>
    </location>
</feature>
<feature type="helix" evidence="4">
    <location>
        <begin position="373"/>
        <end position="376"/>
    </location>
</feature>
<feature type="strand" evidence="4">
    <location>
        <begin position="380"/>
        <end position="382"/>
    </location>
</feature>
<feature type="strand" evidence="4">
    <location>
        <begin position="384"/>
        <end position="386"/>
    </location>
</feature>
<feature type="helix" evidence="4">
    <location>
        <begin position="389"/>
        <end position="391"/>
    </location>
</feature>
<feature type="helix" evidence="4">
    <location>
        <begin position="396"/>
        <end position="402"/>
    </location>
</feature>
<reference key="1">
    <citation type="journal article" date="1998" name="Nature">
        <title>Deciphering the biology of Mycobacterium tuberculosis from the complete genome sequence.</title>
        <authorList>
            <person name="Cole S.T."/>
            <person name="Brosch R."/>
            <person name="Parkhill J."/>
            <person name="Garnier T."/>
            <person name="Churcher C.M."/>
            <person name="Harris D.E."/>
            <person name="Gordon S.V."/>
            <person name="Eiglmeier K."/>
            <person name="Gas S."/>
            <person name="Barry C.E. III"/>
            <person name="Tekaia F."/>
            <person name="Badcock K."/>
            <person name="Basham D."/>
            <person name="Brown D."/>
            <person name="Chillingworth T."/>
            <person name="Connor R."/>
            <person name="Davies R.M."/>
            <person name="Devlin K."/>
            <person name="Feltwell T."/>
            <person name="Gentles S."/>
            <person name="Hamlin N."/>
            <person name="Holroyd S."/>
            <person name="Hornsby T."/>
            <person name="Jagels K."/>
            <person name="Krogh A."/>
            <person name="McLean J."/>
            <person name="Moule S."/>
            <person name="Murphy L.D."/>
            <person name="Oliver S."/>
            <person name="Osborne J."/>
            <person name="Quail M.A."/>
            <person name="Rajandream M.A."/>
            <person name="Rogers J."/>
            <person name="Rutter S."/>
            <person name="Seeger K."/>
            <person name="Skelton S."/>
            <person name="Squares S."/>
            <person name="Squares R."/>
            <person name="Sulston J.E."/>
            <person name="Taylor K."/>
            <person name="Whitehead S."/>
            <person name="Barrell B.G."/>
        </authorList>
    </citation>
    <scope>NUCLEOTIDE SEQUENCE [LARGE SCALE GENOMIC DNA]</scope>
    <source>
        <strain>ATCC 25618 / H37Rv</strain>
    </source>
</reference>
<reference key="2">
    <citation type="journal article" date="2010" name="PLoS ONE">
        <title>Prokaryotic ubiquitin-like protein (Pup) proteome of Mycobacterium tuberculosis.</title>
        <authorList>
            <person name="Festa R.A."/>
            <person name="McAllister F."/>
            <person name="Pearce M.J."/>
            <person name="Mintseris J."/>
            <person name="Burns K.E."/>
            <person name="Gygi S.P."/>
            <person name="Darwin K.H."/>
        </authorList>
    </citation>
    <scope>PUPYLATION AT LYS-345</scope>
    <scope>IDENTIFICATION BY MASS SPECTROMETRY</scope>
    <source>
        <strain>ATCC 25618 / H37Rv</strain>
    </source>
</reference>
<reference key="3">
    <citation type="journal article" date="2011" name="Mol. Cell. Proteomics">
        <title>Proteogenomic analysis of Mycobacterium tuberculosis by high resolution mass spectrometry.</title>
        <authorList>
            <person name="Kelkar D.S."/>
            <person name="Kumar D."/>
            <person name="Kumar P."/>
            <person name="Balakrishnan L."/>
            <person name="Muthusamy B."/>
            <person name="Yadav A.K."/>
            <person name="Shrivastava P."/>
            <person name="Marimuthu A."/>
            <person name="Anand S."/>
            <person name="Sundaram H."/>
            <person name="Kingsbury R."/>
            <person name="Harsha H.C."/>
            <person name="Nair B."/>
            <person name="Prasad T.S."/>
            <person name="Chauhan D.S."/>
            <person name="Katoch K."/>
            <person name="Katoch V.M."/>
            <person name="Kumar P."/>
            <person name="Chaerkady R."/>
            <person name="Ramachandran S."/>
            <person name="Dash D."/>
            <person name="Pandey A."/>
        </authorList>
    </citation>
    <scope>IDENTIFICATION BY MASS SPECTROMETRY [LARGE SCALE ANALYSIS]</scope>
    <source>
        <strain>ATCC 25618 / H37Rv</strain>
    </source>
</reference>
<reference evidence="3" key="4">
    <citation type="journal article" date="2015" name="Tuberculosis">
        <title>Increasing the structural coverage of tuberculosis drug targets.</title>
        <authorList>
            <person name="Baugh L."/>
            <person name="Phan I."/>
            <person name="Begley D.W."/>
            <person name="Clifton M.C."/>
            <person name="Armour B."/>
            <person name="Dranow D.M."/>
            <person name="Taylor B.M."/>
            <person name="Muruthi M.M."/>
            <person name="Abendroth J."/>
            <person name="Fairman J.W."/>
            <person name="Fox D. III"/>
            <person name="Dieterich S.H."/>
            <person name="Staker B.L."/>
            <person name="Gardberg A.S."/>
            <person name="Choi R."/>
            <person name="Hewitt S.N."/>
            <person name="Napuli A.J."/>
            <person name="Myers J."/>
            <person name="Barrett L.K."/>
            <person name="Zhang Y."/>
            <person name="Ferrell M."/>
            <person name="Mundt E."/>
            <person name="Thompkins K."/>
            <person name="Tran N."/>
            <person name="Lyons-Abbott S."/>
            <person name="Abramov A."/>
            <person name="Sekar A."/>
            <person name="Serbzhinskiy D."/>
            <person name="Lorimer D."/>
            <person name="Buchko G.W."/>
            <person name="Stacy R."/>
            <person name="Stewart L.J."/>
            <person name="Edwards T.E."/>
            <person name="Van Voorhis W.C."/>
            <person name="Myler P.J."/>
        </authorList>
    </citation>
    <scope>X-RAY CRYSTALLOGRAPHY (1.85 ANGSTROMS)</scope>
</reference>
<proteinExistence type="evidence at protein level"/>
<comment type="function">
    <text evidence="1">Catalyzes the formation of S-adenosylmethionine (AdoMet) from methionine and ATP. The overall synthetic reaction is composed of two sequential steps, AdoMet formation and the subsequent tripolyphosphate hydrolysis which occurs prior to release of AdoMet from the enzyme.</text>
</comment>
<comment type="catalytic activity">
    <reaction evidence="1">
        <text>L-methionine + ATP + H2O = S-adenosyl-L-methionine + phosphate + diphosphate</text>
        <dbReference type="Rhea" id="RHEA:21080"/>
        <dbReference type="ChEBI" id="CHEBI:15377"/>
        <dbReference type="ChEBI" id="CHEBI:30616"/>
        <dbReference type="ChEBI" id="CHEBI:33019"/>
        <dbReference type="ChEBI" id="CHEBI:43474"/>
        <dbReference type="ChEBI" id="CHEBI:57844"/>
        <dbReference type="ChEBI" id="CHEBI:59789"/>
        <dbReference type="EC" id="2.5.1.6"/>
    </reaction>
</comment>
<comment type="cofactor">
    <cofactor evidence="1">
        <name>Mg(2+)</name>
        <dbReference type="ChEBI" id="CHEBI:18420"/>
    </cofactor>
    <text evidence="1">Binds 2 divalent ions per subunit.</text>
</comment>
<comment type="cofactor">
    <cofactor evidence="1">
        <name>K(+)</name>
        <dbReference type="ChEBI" id="CHEBI:29103"/>
    </cofactor>
    <text evidence="1">Binds 1 potassium ion per subunit.</text>
</comment>
<comment type="pathway">
    <text evidence="1">Amino-acid biosynthesis; S-adenosyl-L-methionine biosynthesis; S-adenosyl-L-methionine from L-methionine: step 1/1.</text>
</comment>
<comment type="subunit">
    <text evidence="1">Homotetramer; dimer of dimers.</text>
</comment>
<comment type="subcellular location">
    <subcellularLocation>
        <location evidence="1">Cytoplasm</location>
    </subcellularLocation>
</comment>
<comment type="similarity">
    <text evidence="1">Belongs to the AdoMet synthase family.</text>
</comment>
<sequence length="403" mass="43047">MSEKGRLFTSESVTEGHPDKICDAISDSVLDALLAADPRSRVAVETLVTTGQVHVVGEVTTSAKEAFADITNTVRARILEIGYDSSDKGFDGATCGVNIGIGAQSPDIAQGVDTAHEARVEGAADPLDSQGAGDQGLMFGYAINATPELMPLPIALAHRLSRRLTEVRKNGVLPYLRPDGKTQVTIAYEDNVPVRLDTVVISTQHAADIDLEKTLDPDIREKVLNTVLDDLAHETLDASTVRVLVNPTGKFVLGGPMGDAGLTGRKIIVDTYGGWARHGGGAFSGKDPSKVDRSAAYAMRWVAKNVVAAGLAERVEVQVAYAIGKAAPVGLFVETFGTETEDPVKIEKAIGEVFDLRPGAIIRDLNLLRPIYAPTAAYGHFGRTDVELPWEQLDKVDDLKRAI</sequence>
<dbReference type="EC" id="2.5.1.6" evidence="1"/>
<dbReference type="EMBL" id="AL123456">
    <property type="protein sequence ID" value="CCP44151.1"/>
    <property type="molecule type" value="Genomic_DNA"/>
</dbReference>
<dbReference type="PIR" id="F70899">
    <property type="entry name" value="F70899"/>
</dbReference>
<dbReference type="RefSeq" id="NP_215908.1">
    <property type="nucleotide sequence ID" value="NC_000962.3"/>
</dbReference>
<dbReference type="RefSeq" id="WP_003900333.1">
    <property type="nucleotide sequence ID" value="NZ_NVQJ01000050.1"/>
</dbReference>
<dbReference type="PDB" id="3TDE">
    <property type="method" value="X-ray"/>
    <property type="resolution" value="1.85 A"/>
    <property type="chains" value="A/B/C/D=2-403"/>
</dbReference>
<dbReference type="PDBsum" id="3TDE"/>
<dbReference type="SMR" id="P9WGV1"/>
<dbReference type="FunCoup" id="P9WGV1">
    <property type="interactions" value="561"/>
</dbReference>
<dbReference type="STRING" id="83332.Rv1392"/>
<dbReference type="PaxDb" id="83332-Rv1392"/>
<dbReference type="DNASU" id="886741"/>
<dbReference type="GeneID" id="886741"/>
<dbReference type="KEGG" id="mtu:Rv1392"/>
<dbReference type="KEGG" id="mtv:RVBD_1392"/>
<dbReference type="TubercuList" id="Rv1392"/>
<dbReference type="eggNOG" id="COG0192">
    <property type="taxonomic scope" value="Bacteria"/>
</dbReference>
<dbReference type="InParanoid" id="P9WGV1"/>
<dbReference type="OrthoDB" id="9801686at2"/>
<dbReference type="PhylomeDB" id="P9WGV1"/>
<dbReference type="UniPathway" id="UPA00315">
    <property type="reaction ID" value="UER00080"/>
</dbReference>
<dbReference type="EvolutionaryTrace" id="P9WGV1"/>
<dbReference type="Proteomes" id="UP000001584">
    <property type="component" value="Chromosome"/>
</dbReference>
<dbReference type="GO" id="GO:0005829">
    <property type="term" value="C:cytosol"/>
    <property type="evidence" value="ECO:0007005"/>
    <property type="project" value="MTBBASE"/>
</dbReference>
<dbReference type="GO" id="GO:0009274">
    <property type="term" value="C:peptidoglycan-based cell wall"/>
    <property type="evidence" value="ECO:0007005"/>
    <property type="project" value="MTBBASE"/>
</dbReference>
<dbReference type="GO" id="GO:0005886">
    <property type="term" value="C:plasma membrane"/>
    <property type="evidence" value="ECO:0007005"/>
    <property type="project" value="MTBBASE"/>
</dbReference>
<dbReference type="GO" id="GO:0005524">
    <property type="term" value="F:ATP binding"/>
    <property type="evidence" value="ECO:0007669"/>
    <property type="project" value="UniProtKB-UniRule"/>
</dbReference>
<dbReference type="GO" id="GO:0000287">
    <property type="term" value="F:magnesium ion binding"/>
    <property type="evidence" value="ECO:0007669"/>
    <property type="project" value="UniProtKB-UniRule"/>
</dbReference>
<dbReference type="GO" id="GO:0004478">
    <property type="term" value="F:methionine adenosyltransferase activity"/>
    <property type="evidence" value="ECO:0000318"/>
    <property type="project" value="GO_Central"/>
</dbReference>
<dbReference type="GO" id="GO:0035375">
    <property type="term" value="F:zymogen binding"/>
    <property type="evidence" value="ECO:0000353"/>
    <property type="project" value="CAFA"/>
</dbReference>
<dbReference type="GO" id="GO:0006730">
    <property type="term" value="P:one-carbon metabolic process"/>
    <property type="evidence" value="ECO:0007669"/>
    <property type="project" value="UniProtKB-KW"/>
</dbReference>
<dbReference type="GO" id="GO:0006556">
    <property type="term" value="P:S-adenosylmethionine biosynthetic process"/>
    <property type="evidence" value="ECO:0000318"/>
    <property type="project" value="GO_Central"/>
</dbReference>
<dbReference type="CDD" id="cd18079">
    <property type="entry name" value="S-AdoMet_synt"/>
    <property type="match status" value="1"/>
</dbReference>
<dbReference type="FunFam" id="3.30.300.10:FF:000006">
    <property type="entry name" value="S-adenosylmethionine synthase"/>
    <property type="match status" value="1"/>
</dbReference>
<dbReference type="Gene3D" id="3.30.300.10">
    <property type="match status" value="3"/>
</dbReference>
<dbReference type="HAMAP" id="MF_00086">
    <property type="entry name" value="S_AdoMet_synth1"/>
    <property type="match status" value="1"/>
</dbReference>
<dbReference type="InterPro" id="IPR022631">
    <property type="entry name" value="ADOMET_SYNTHASE_CS"/>
</dbReference>
<dbReference type="InterPro" id="IPR022630">
    <property type="entry name" value="S-AdoMet_synt_C"/>
</dbReference>
<dbReference type="InterPro" id="IPR022629">
    <property type="entry name" value="S-AdoMet_synt_central"/>
</dbReference>
<dbReference type="InterPro" id="IPR022628">
    <property type="entry name" value="S-AdoMet_synt_N"/>
</dbReference>
<dbReference type="InterPro" id="IPR002133">
    <property type="entry name" value="S-AdoMet_synthetase"/>
</dbReference>
<dbReference type="InterPro" id="IPR022636">
    <property type="entry name" value="S-AdoMet_synthetase_sfam"/>
</dbReference>
<dbReference type="NCBIfam" id="TIGR01034">
    <property type="entry name" value="metK"/>
    <property type="match status" value="1"/>
</dbReference>
<dbReference type="PANTHER" id="PTHR11964">
    <property type="entry name" value="S-ADENOSYLMETHIONINE SYNTHETASE"/>
    <property type="match status" value="1"/>
</dbReference>
<dbReference type="Pfam" id="PF02773">
    <property type="entry name" value="S-AdoMet_synt_C"/>
    <property type="match status" value="1"/>
</dbReference>
<dbReference type="Pfam" id="PF02772">
    <property type="entry name" value="S-AdoMet_synt_M"/>
    <property type="match status" value="1"/>
</dbReference>
<dbReference type="Pfam" id="PF00438">
    <property type="entry name" value="S-AdoMet_synt_N"/>
    <property type="match status" value="1"/>
</dbReference>
<dbReference type="PIRSF" id="PIRSF000497">
    <property type="entry name" value="MAT"/>
    <property type="match status" value="1"/>
</dbReference>
<dbReference type="SUPFAM" id="SSF55973">
    <property type="entry name" value="S-adenosylmethionine synthetase"/>
    <property type="match status" value="3"/>
</dbReference>
<dbReference type="PROSITE" id="PS00376">
    <property type="entry name" value="ADOMET_SYNTHASE_1"/>
    <property type="match status" value="1"/>
</dbReference>
<dbReference type="PROSITE" id="PS00377">
    <property type="entry name" value="ADOMET_SYNTHASE_2"/>
    <property type="match status" value="1"/>
</dbReference>
<organism>
    <name type="scientific">Mycobacterium tuberculosis (strain ATCC 25618 / H37Rv)</name>
    <dbReference type="NCBI Taxonomy" id="83332"/>
    <lineage>
        <taxon>Bacteria</taxon>
        <taxon>Bacillati</taxon>
        <taxon>Actinomycetota</taxon>
        <taxon>Actinomycetes</taxon>
        <taxon>Mycobacteriales</taxon>
        <taxon>Mycobacteriaceae</taxon>
        <taxon>Mycobacterium</taxon>
        <taxon>Mycobacterium tuberculosis complex</taxon>
    </lineage>
</organism>
<evidence type="ECO:0000255" key="1">
    <source>
        <dbReference type="HAMAP-Rule" id="MF_00086"/>
    </source>
</evidence>
<evidence type="ECO:0000269" key="2">
    <source>
    </source>
</evidence>
<evidence type="ECO:0007744" key="3">
    <source>
        <dbReference type="PDB" id="3TDE"/>
    </source>
</evidence>
<evidence type="ECO:0007829" key="4">
    <source>
        <dbReference type="PDB" id="3TDE"/>
    </source>
</evidence>